<accession>B0VKK4</accession>
<reference key="1">
    <citation type="journal article" date="2008" name="PLoS ONE">
        <title>Comparative analysis of Acinetobacters: three genomes for three lifestyles.</title>
        <authorList>
            <person name="Vallenet D."/>
            <person name="Nordmann P."/>
            <person name="Barbe V."/>
            <person name="Poirel L."/>
            <person name="Mangenot S."/>
            <person name="Bataille E."/>
            <person name="Dossat C."/>
            <person name="Gas S."/>
            <person name="Kreimeyer A."/>
            <person name="Lenoble P."/>
            <person name="Oztas S."/>
            <person name="Poulain J."/>
            <person name="Segurens B."/>
            <person name="Robert C."/>
            <person name="Abergel C."/>
            <person name="Claverie J.-M."/>
            <person name="Raoult D."/>
            <person name="Medigue C."/>
            <person name="Weissenbach J."/>
            <person name="Cruveiller S."/>
        </authorList>
    </citation>
    <scope>NUCLEOTIDE SEQUENCE [LARGE SCALE GENOMIC DNA]</scope>
    <source>
        <strain>SDF</strain>
    </source>
</reference>
<name>PANB_ACIBS</name>
<gene>
    <name evidence="1" type="primary">panB</name>
    <name type="ordered locus">ABSDF2933</name>
</gene>
<sequence>MISLSDLRKFKAEGRKFSCLTCYDASMAKAMELAEIDTILIGDSLGMAIQGRDSTLPVTVEDMAYHTAAVRRGNQHALIMTDLPFMSYATLKDALQNAKTVMQAGAQMIKIEGGAWLSETVQVLTRNGVPVCVHLGLTPQSVHVFGGYKLQARTREAADQLIADCTAVVEAGAAVLLLECVPAQLGQEIAELFPNTPVIGIGAGNATDGQVLVVQDMLGLTFGRVARFVRNFMKEQSGETAILDAFKAFHAAVQDQSFPAKEHTFQVEL</sequence>
<proteinExistence type="inferred from homology"/>
<organism>
    <name type="scientific">Acinetobacter baumannii (strain SDF)</name>
    <dbReference type="NCBI Taxonomy" id="509170"/>
    <lineage>
        <taxon>Bacteria</taxon>
        <taxon>Pseudomonadati</taxon>
        <taxon>Pseudomonadota</taxon>
        <taxon>Gammaproteobacteria</taxon>
        <taxon>Moraxellales</taxon>
        <taxon>Moraxellaceae</taxon>
        <taxon>Acinetobacter</taxon>
        <taxon>Acinetobacter calcoaceticus/baumannii complex</taxon>
    </lineage>
</organism>
<feature type="chain" id="PRO_1000096934" description="3-methyl-2-oxobutanoate hydroxymethyltransferase">
    <location>
        <begin position="1"/>
        <end position="269"/>
    </location>
</feature>
<feature type="active site" description="Proton acceptor" evidence="1">
    <location>
        <position position="179"/>
    </location>
</feature>
<feature type="binding site" evidence="1">
    <location>
        <begin position="43"/>
        <end position="44"/>
    </location>
    <ligand>
        <name>3-methyl-2-oxobutanoate</name>
        <dbReference type="ChEBI" id="CHEBI:11851"/>
    </ligand>
</feature>
<feature type="binding site" evidence="1">
    <location>
        <position position="43"/>
    </location>
    <ligand>
        <name>Mg(2+)</name>
        <dbReference type="ChEBI" id="CHEBI:18420"/>
    </ligand>
</feature>
<feature type="binding site" evidence="1">
    <location>
        <position position="82"/>
    </location>
    <ligand>
        <name>3-methyl-2-oxobutanoate</name>
        <dbReference type="ChEBI" id="CHEBI:11851"/>
    </ligand>
</feature>
<feature type="binding site" evidence="1">
    <location>
        <position position="82"/>
    </location>
    <ligand>
        <name>Mg(2+)</name>
        <dbReference type="ChEBI" id="CHEBI:18420"/>
    </ligand>
</feature>
<feature type="binding site" evidence="1">
    <location>
        <position position="110"/>
    </location>
    <ligand>
        <name>3-methyl-2-oxobutanoate</name>
        <dbReference type="ChEBI" id="CHEBI:11851"/>
    </ligand>
</feature>
<feature type="binding site" evidence="1">
    <location>
        <position position="112"/>
    </location>
    <ligand>
        <name>Mg(2+)</name>
        <dbReference type="ChEBI" id="CHEBI:18420"/>
    </ligand>
</feature>
<keyword id="KW-0963">Cytoplasm</keyword>
<keyword id="KW-0460">Magnesium</keyword>
<keyword id="KW-0479">Metal-binding</keyword>
<keyword id="KW-0566">Pantothenate biosynthesis</keyword>
<keyword id="KW-0808">Transferase</keyword>
<protein>
    <recommendedName>
        <fullName evidence="1">3-methyl-2-oxobutanoate hydroxymethyltransferase</fullName>
        <ecNumber evidence="1">2.1.2.11</ecNumber>
    </recommendedName>
    <alternativeName>
        <fullName evidence="1">Ketopantoate hydroxymethyltransferase</fullName>
        <shortName evidence="1">KPHMT</shortName>
    </alternativeName>
</protein>
<comment type="function">
    <text evidence="1">Catalyzes the reversible reaction in which hydroxymethyl group from 5,10-methylenetetrahydrofolate is transferred onto alpha-ketoisovalerate to form ketopantoate.</text>
</comment>
<comment type="catalytic activity">
    <reaction evidence="1">
        <text>3-methyl-2-oxobutanoate + (6R)-5,10-methylene-5,6,7,8-tetrahydrofolate + H2O = 2-dehydropantoate + (6S)-5,6,7,8-tetrahydrofolate</text>
        <dbReference type="Rhea" id="RHEA:11824"/>
        <dbReference type="ChEBI" id="CHEBI:11561"/>
        <dbReference type="ChEBI" id="CHEBI:11851"/>
        <dbReference type="ChEBI" id="CHEBI:15377"/>
        <dbReference type="ChEBI" id="CHEBI:15636"/>
        <dbReference type="ChEBI" id="CHEBI:57453"/>
        <dbReference type="EC" id="2.1.2.11"/>
    </reaction>
</comment>
<comment type="cofactor">
    <cofactor evidence="1">
        <name>Mg(2+)</name>
        <dbReference type="ChEBI" id="CHEBI:18420"/>
    </cofactor>
    <text evidence="1">Binds 1 Mg(2+) ion per subunit.</text>
</comment>
<comment type="pathway">
    <text evidence="1">Cofactor biosynthesis; (R)-pantothenate biosynthesis; (R)-pantoate from 3-methyl-2-oxobutanoate: step 1/2.</text>
</comment>
<comment type="subunit">
    <text evidence="1">Homodecamer; pentamer of dimers.</text>
</comment>
<comment type="subcellular location">
    <subcellularLocation>
        <location evidence="1">Cytoplasm</location>
    </subcellularLocation>
</comment>
<comment type="similarity">
    <text evidence="1">Belongs to the PanB family.</text>
</comment>
<evidence type="ECO:0000255" key="1">
    <source>
        <dbReference type="HAMAP-Rule" id="MF_00156"/>
    </source>
</evidence>
<dbReference type="EC" id="2.1.2.11" evidence="1"/>
<dbReference type="EMBL" id="CU468230">
    <property type="protein sequence ID" value="CAP02223.1"/>
    <property type="molecule type" value="Genomic_DNA"/>
</dbReference>
<dbReference type="SMR" id="B0VKK4"/>
<dbReference type="KEGG" id="abm:ABSDF2933"/>
<dbReference type="HOGENOM" id="CLU_036645_1_0_6"/>
<dbReference type="UniPathway" id="UPA00028">
    <property type="reaction ID" value="UER00003"/>
</dbReference>
<dbReference type="Proteomes" id="UP000001741">
    <property type="component" value="Chromosome"/>
</dbReference>
<dbReference type="GO" id="GO:0005737">
    <property type="term" value="C:cytoplasm"/>
    <property type="evidence" value="ECO:0007669"/>
    <property type="project" value="UniProtKB-SubCell"/>
</dbReference>
<dbReference type="GO" id="GO:0003864">
    <property type="term" value="F:3-methyl-2-oxobutanoate hydroxymethyltransferase activity"/>
    <property type="evidence" value="ECO:0007669"/>
    <property type="project" value="UniProtKB-UniRule"/>
</dbReference>
<dbReference type="GO" id="GO:0000287">
    <property type="term" value="F:magnesium ion binding"/>
    <property type="evidence" value="ECO:0007669"/>
    <property type="project" value="TreeGrafter"/>
</dbReference>
<dbReference type="GO" id="GO:0015940">
    <property type="term" value="P:pantothenate biosynthetic process"/>
    <property type="evidence" value="ECO:0007669"/>
    <property type="project" value="UniProtKB-UniRule"/>
</dbReference>
<dbReference type="CDD" id="cd06557">
    <property type="entry name" value="KPHMT-like"/>
    <property type="match status" value="1"/>
</dbReference>
<dbReference type="FunFam" id="3.20.20.60:FF:000003">
    <property type="entry name" value="3-methyl-2-oxobutanoate hydroxymethyltransferase"/>
    <property type="match status" value="1"/>
</dbReference>
<dbReference type="Gene3D" id="3.20.20.60">
    <property type="entry name" value="Phosphoenolpyruvate-binding domains"/>
    <property type="match status" value="1"/>
</dbReference>
<dbReference type="HAMAP" id="MF_00156">
    <property type="entry name" value="PanB"/>
    <property type="match status" value="1"/>
</dbReference>
<dbReference type="InterPro" id="IPR003700">
    <property type="entry name" value="Pantoate_hydroxy_MeTrfase"/>
</dbReference>
<dbReference type="InterPro" id="IPR015813">
    <property type="entry name" value="Pyrv/PenolPyrv_kinase-like_dom"/>
</dbReference>
<dbReference type="InterPro" id="IPR040442">
    <property type="entry name" value="Pyrv_kinase-like_dom_sf"/>
</dbReference>
<dbReference type="NCBIfam" id="TIGR00222">
    <property type="entry name" value="panB"/>
    <property type="match status" value="1"/>
</dbReference>
<dbReference type="NCBIfam" id="NF001452">
    <property type="entry name" value="PRK00311.1"/>
    <property type="match status" value="1"/>
</dbReference>
<dbReference type="PANTHER" id="PTHR20881">
    <property type="entry name" value="3-METHYL-2-OXOBUTANOATE HYDROXYMETHYLTRANSFERASE"/>
    <property type="match status" value="1"/>
</dbReference>
<dbReference type="PANTHER" id="PTHR20881:SF0">
    <property type="entry name" value="3-METHYL-2-OXOBUTANOATE HYDROXYMETHYLTRANSFERASE"/>
    <property type="match status" value="1"/>
</dbReference>
<dbReference type="Pfam" id="PF02548">
    <property type="entry name" value="Pantoate_transf"/>
    <property type="match status" value="1"/>
</dbReference>
<dbReference type="PIRSF" id="PIRSF000388">
    <property type="entry name" value="Pantoate_hydroxy_MeTrfase"/>
    <property type="match status" value="1"/>
</dbReference>
<dbReference type="SUPFAM" id="SSF51621">
    <property type="entry name" value="Phosphoenolpyruvate/pyruvate domain"/>
    <property type="match status" value="1"/>
</dbReference>